<organism>
    <name type="scientific">Legionella pneumophila (strain Paris)</name>
    <dbReference type="NCBI Taxonomy" id="297246"/>
    <lineage>
        <taxon>Bacteria</taxon>
        <taxon>Pseudomonadati</taxon>
        <taxon>Pseudomonadota</taxon>
        <taxon>Gammaproteobacteria</taxon>
        <taxon>Legionellales</taxon>
        <taxon>Legionellaceae</taxon>
        <taxon>Legionella</taxon>
    </lineage>
</organism>
<comment type="catalytic activity">
    <reaction evidence="1">
        <text>tRNA(His) + L-histidine + ATP = L-histidyl-tRNA(His) + AMP + diphosphate + H(+)</text>
        <dbReference type="Rhea" id="RHEA:17313"/>
        <dbReference type="Rhea" id="RHEA-COMP:9665"/>
        <dbReference type="Rhea" id="RHEA-COMP:9689"/>
        <dbReference type="ChEBI" id="CHEBI:15378"/>
        <dbReference type="ChEBI" id="CHEBI:30616"/>
        <dbReference type="ChEBI" id="CHEBI:33019"/>
        <dbReference type="ChEBI" id="CHEBI:57595"/>
        <dbReference type="ChEBI" id="CHEBI:78442"/>
        <dbReference type="ChEBI" id="CHEBI:78527"/>
        <dbReference type="ChEBI" id="CHEBI:456215"/>
        <dbReference type="EC" id="6.1.1.21"/>
    </reaction>
</comment>
<comment type="subunit">
    <text evidence="1">Homodimer.</text>
</comment>
<comment type="subcellular location">
    <subcellularLocation>
        <location evidence="1">Cytoplasm</location>
    </subcellularLocation>
</comment>
<comment type="similarity">
    <text evidence="1">Belongs to the class-II aminoacyl-tRNA synthetase family.</text>
</comment>
<evidence type="ECO:0000255" key="1">
    <source>
        <dbReference type="HAMAP-Rule" id="MF_00127"/>
    </source>
</evidence>
<name>SYH_LEGPA</name>
<proteinExistence type="inferred from homology"/>
<sequence length="426" mass="48438">MVVDKIQAIRGMNDVLPDSTSVWRFIEQTFINCLVRYGYKEIRFPIVENTQLFKRTIGEITDIVEKEMYTFNDLNGDSITLRPEGTAGCVRACIEHGLLHNQQQKLWYLGPMFRHERPQKGRYRQFNQFGVEALGITGTAIELELISICRRLWTDLGFSQSVQLQVNSLGEINERQKYRSILVEYLHDHFHILDEDSKRRLDKNPLRVLDSKNPDLQHLIQNAPKLIDVLGDDSREHFQSFCNGLETLGIPYSINPVLVRGLDYYGQTVFEWVTDQLGSQATICAGGRYDMLVEFLGGAPTPAVGFALGLERIFLLMETLNLLNESNNKQSIFIIATNEEAILKALVMAESIRNAHPSLDVITNTAGGGFKSQFKKADKSGARMALILGEDEIAREYVSIKDLRTEIEQISIPMTKINEFLQNYLA</sequence>
<feature type="chain" id="PRO_0000136182" description="Histidine--tRNA ligase">
    <location>
        <begin position="1"/>
        <end position="426"/>
    </location>
</feature>
<accession>Q5X519</accession>
<gene>
    <name evidence="1" type="primary">hisS</name>
    <name type="ordered locus">lpp1501</name>
</gene>
<reference key="1">
    <citation type="journal article" date="2004" name="Nat. Genet.">
        <title>Evidence in the Legionella pneumophila genome for exploitation of host cell functions and high genome plasticity.</title>
        <authorList>
            <person name="Cazalet C."/>
            <person name="Rusniok C."/>
            <person name="Brueggemann H."/>
            <person name="Zidane N."/>
            <person name="Magnier A."/>
            <person name="Ma L."/>
            <person name="Tichit M."/>
            <person name="Jarraud S."/>
            <person name="Bouchier C."/>
            <person name="Vandenesch F."/>
            <person name="Kunst F."/>
            <person name="Etienne J."/>
            <person name="Glaser P."/>
            <person name="Buchrieser C."/>
        </authorList>
    </citation>
    <scope>NUCLEOTIDE SEQUENCE [LARGE SCALE GENOMIC DNA]</scope>
    <source>
        <strain>Paris</strain>
    </source>
</reference>
<dbReference type="EC" id="6.1.1.21" evidence="1"/>
<dbReference type="EMBL" id="CR628336">
    <property type="protein sequence ID" value="CAH12652.1"/>
    <property type="molecule type" value="Genomic_DNA"/>
</dbReference>
<dbReference type="SMR" id="Q5X519"/>
<dbReference type="KEGG" id="lpp:lpp1501"/>
<dbReference type="LegioList" id="lpp1501"/>
<dbReference type="HOGENOM" id="CLU_025113_1_1_6"/>
<dbReference type="GO" id="GO:0005737">
    <property type="term" value="C:cytoplasm"/>
    <property type="evidence" value="ECO:0007669"/>
    <property type="project" value="UniProtKB-SubCell"/>
</dbReference>
<dbReference type="GO" id="GO:0005524">
    <property type="term" value="F:ATP binding"/>
    <property type="evidence" value="ECO:0007669"/>
    <property type="project" value="UniProtKB-UniRule"/>
</dbReference>
<dbReference type="GO" id="GO:0004821">
    <property type="term" value="F:histidine-tRNA ligase activity"/>
    <property type="evidence" value="ECO:0007669"/>
    <property type="project" value="UniProtKB-UniRule"/>
</dbReference>
<dbReference type="GO" id="GO:0006427">
    <property type="term" value="P:histidyl-tRNA aminoacylation"/>
    <property type="evidence" value="ECO:0007669"/>
    <property type="project" value="UniProtKB-UniRule"/>
</dbReference>
<dbReference type="CDD" id="cd00773">
    <property type="entry name" value="HisRS-like_core"/>
    <property type="match status" value="1"/>
</dbReference>
<dbReference type="CDD" id="cd00859">
    <property type="entry name" value="HisRS_anticodon"/>
    <property type="match status" value="1"/>
</dbReference>
<dbReference type="FunFam" id="3.30.930.10:FF:000005">
    <property type="entry name" value="Histidine--tRNA ligase"/>
    <property type="match status" value="1"/>
</dbReference>
<dbReference type="Gene3D" id="3.40.50.800">
    <property type="entry name" value="Anticodon-binding domain"/>
    <property type="match status" value="1"/>
</dbReference>
<dbReference type="Gene3D" id="3.30.930.10">
    <property type="entry name" value="Bira Bifunctional Protein, Domain 2"/>
    <property type="match status" value="1"/>
</dbReference>
<dbReference type="HAMAP" id="MF_00127">
    <property type="entry name" value="His_tRNA_synth"/>
    <property type="match status" value="1"/>
</dbReference>
<dbReference type="InterPro" id="IPR006195">
    <property type="entry name" value="aa-tRNA-synth_II"/>
</dbReference>
<dbReference type="InterPro" id="IPR045864">
    <property type="entry name" value="aa-tRNA-synth_II/BPL/LPL"/>
</dbReference>
<dbReference type="InterPro" id="IPR004154">
    <property type="entry name" value="Anticodon-bd"/>
</dbReference>
<dbReference type="InterPro" id="IPR036621">
    <property type="entry name" value="Anticodon-bd_dom_sf"/>
</dbReference>
<dbReference type="InterPro" id="IPR015807">
    <property type="entry name" value="His-tRNA-ligase"/>
</dbReference>
<dbReference type="InterPro" id="IPR041715">
    <property type="entry name" value="HisRS-like_core"/>
</dbReference>
<dbReference type="InterPro" id="IPR004516">
    <property type="entry name" value="HisRS/HisZ"/>
</dbReference>
<dbReference type="InterPro" id="IPR033656">
    <property type="entry name" value="HisRS_anticodon"/>
</dbReference>
<dbReference type="NCBIfam" id="TIGR00442">
    <property type="entry name" value="hisS"/>
    <property type="match status" value="1"/>
</dbReference>
<dbReference type="PANTHER" id="PTHR43707:SF1">
    <property type="entry name" value="HISTIDINE--TRNA LIGASE, MITOCHONDRIAL-RELATED"/>
    <property type="match status" value="1"/>
</dbReference>
<dbReference type="PANTHER" id="PTHR43707">
    <property type="entry name" value="HISTIDYL-TRNA SYNTHETASE"/>
    <property type="match status" value="1"/>
</dbReference>
<dbReference type="Pfam" id="PF03129">
    <property type="entry name" value="HGTP_anticodon"/>
    <property type="match status" value="1"/>
</dbReference>
<dbReference type="Pfam" id="PF13393">
    <property type="entry name" value="tRNA-synt_His"/>
    <property type="match status" value="1"/>
</dbReference>
<dbReference type="PIRSF" id="PIRSF001549">
    <property type="entry name" value="His-tRNA_synth"/>
    <property type="match status" value="1"/>
</dbReference>
<dbReference type="SUPFAM" id="SSF52954">
    <property type="entry name" value="Class II aaRS ABD-related"/>
    <property type="match status" value="1"/>
</dbReference>
<dbReference type="SUPFAM" id="SSF55681">
    <property type="entry name" value="Class II aaRS and biotin synthetases"/>
    <property type="match status" value="1"/>
</dbReference>
<dbReference type="PROSITE" id="PS50862">
    <property type="entry name" value="AA_TRNA_LIGASE_II"/>
    <property type="match status" value="1"/>
</dbReference>
<protein>
    <recommendedName>
        <fullName evidence="1">Histidine--tRNA ligase</fullName>
        <ecNumber evidence="1">6.1.1.21</ecNumber>
    </recommendedName>
    <alternativeName>
        <fullName evidence="1">Histidyl-tRNA synthetase</fullName>
        <shortName evidence="1">HisRS</shortName>
    </alternativeName>
</protein>
<keyword id="KW-0030">Aminoacyl-tRNA synthetase</keyword>
<keyword id="KW-0067">ATP-binding</keyword>
<keyword id="KW-0963">Cytoplasm</keyword>
<keyword id="KW-0436">Ligase</keyword>
<keyword id="KW-0547">Nucleotide-binding</keyword>
<keyword id="KW-0648">Protein biosynthesis</keyword>